<comment type="similarity">
    <text evidence="1">Belongs to the UPF0213 family.</text>
</comment>
<evidence type="ECO:0000255" key="1">
    <source>
        <dbReference type="HAMAP-Rule" id="MF_01029"/>
    </source>
</evidence>
<protein>
    <recommendedName>
        <fullName evidence="1">UPF0213 protein in potE 3'region</fullName>
    </recommendedName>
</protein>
<reference key="1">
    <citation type="journal article" date="2007" name="J. Microbiol. Biotechnol.">
        <title>Gene cloning, expression, and functional characterization of an ornithine decarboxylase protein from Serratia liquefaciens IFI65.</title>
        <authorList>
            <person name="De las Rivas B."/>
            <person name="Carrascosa A.V."/>
            <person name="Munoz R."/>
        </authorList>
    </citation>
    <scope>NUCLEOTIDE SEQUENCE [GENOMIC DNA]</scope>
    <source>
        <strain>IFI65</strain>
    </source>
</reference>
<accession>A4Q8H2</accession>
<proteinExistence type="inferred from homology"/>
<sequence>MTDTLSPWHLYMLRLPNGMLYTGITTDVERRLAQHQAGKGAKALRGKGELVLAFHCLAGDRSKALRLEYRVKQLSKTQKERLVNHPPLTLDHLLPDAEIKTG</sequence>
<dbReference type="EMBL" id="AM117811">
    <property type="protein sequence ID" value="CAJ41444.1"/>
    <property type="molecule type" value="Genomic_DNA"/>
</dbReference>
<dbReference type="SMR" id="A4Q8H2"/>
<dbReference type="STRING" id="614.XJ20_21370"/>
<dbReference type="CDD" id="cd10456">
    <property type="entry name" value="GIY-YIG_UPF0213"/>
    <property type="match status" value="1"/>
</dbReference>
<dbReference type="Gene3D" id="3.40.1440.10">
    <property type="entry name" value="GIY-YIG endonuclease"/>
    <property type="match status" value="1"/>
</dbReference>
<dbReference type="HAMAP" id="MF_01029">
    <property type="entry name" value="UPF0213"/>
    <property type="match status" value="1"/>
</dbReference>
<dbReference type="InterPro" id="IPR000305">
    <property type="entry name" value="GIY-YIG_endonuc"/>
</dbReference>
<dbReference type="InterPro" id="IPR035901">
    <property type="entry name" value="GIY-YIG_endonuc_sf"/>
</dbReference>
<dbReference type="InterPro" id="IPR050190">
    <property type="entry name" value="UPF0213_domain"/>
</dbReference>
<dbReference type="InterPro" id="IPR022992">
    <property type="entry name" value="UPF0213_GIY-YIG_endonuc"/>
</dbReference>
<dbReference type="PANTHER" id="PTHR34477">
    <property type="entry name" value="UPF0213 PROTEIN YHBQ"/>
    <property type="match status" value="1"/>
</dbReference>
<dbReference type="PANTHER" id="PTHR34477:SF1">
    <property type="entry name" value="UPF0213 PROTEIN YHBQ"/>
    <property type="match status" value="1"/>
</dbReference>
<dbReference type="Pfam" id="PF01541">
    <property type="entry name" value="GIY-YIG"/>
    <property type="match status" value="1"/>
</dbReference>
<dbReference type="SMART" id="SM00465">
    <property type="entry name" value="GIYc"/>
    <property type="match status" value="1"/>
</dbReference>
<dbReference type="SUPFAM" id="SSF82771">
    <property type="entry name" value="GIY-YIG endonuclease"/>
    <property type="match status" value="1"/>
</dbReference>
<dbReference type="PROSITE" id="PS50164">
    <property type="entry name" value="GIY_YIG"/>
    <property type="match status" value="1"/>
</dbReference>
<organism>
    <name type="scientific">Serratia liquefaciens</name>
    <dbReference type="NCBI Taxonomy" id="614"/>
    <lineage>
        <taxon>Bacteria</taxon>
        <taxon>Pseudomonadati</taxon>
        <taxon>Pseudomonadota</taxon>
        <taxon>Gammaproteobacteria</taxon>
        <taxon>Enterobacterales</taxon>
        <taxon>Yersiniaceae</taxon>
        <taxon>Serratia</taxon>
    </lineage>
</organism>
<name>YPOTE_SERLI</name>
<feature type="chain" id="PRO_0000328914" description="UPF0213 protein in potE 3'region">
    <location>
        <begin position="1"/>
        <end position="102"/>
    </location>
</feature>
<feature type="domain" description="GIY-YIG" evidence="1">
    <location>
        <begin position="6"/>
        <end position="81"/>
    </location>
</feature>